<gene>
    <name type="primary">ygjH</name>
    <name type="ordered locus">b3074</name>
    <name type="ordered locus">JW3045</name>
</gene>
<proteinExistence type="evidence at protein level"/>
<feature type="chain" id="PRO_0000169420" description="tRNA-binding protein YgjH">
    <location>
        <begin position="1"/>
        <end position="110"/>
    </location>
</feature>
<feature type="domain" description="tRNA-binding" evidence="1">
    <location>
        <begin position="8"/>
        <end position="110"/>
    </location>
</feature>
<feature type="helix" evidence="2">
    <location>
        <begin position="6"/>
        <end position="10"/>
    </location>
</feature>
<feature type="strand" evidence="2">
    <location>
        <begin position="14"/>
        <end position="23"/>
    </location>
</feature>
<feature type="strand" evidence="2">
    <location>
        <begin position="32"/>
        <end position="37"/>
    </location>
</feature>
<feature type="strand" evidence="2">
    <location>
        <begin position="39"/>
        <end position="47"/>
    </location>
</feature>
<feature type="turn" evidence="2">
    <location>
        <begin position="50"/>
        <end position="52"/>
    </location>
</feature>
<feature type="helix" evidence="2">
    <location>
        <begin position="55"/>
        <end position="58"/>
    </location>
</feature>
<feature type="strand" evidence="2">
    <location>
        <begin position="62"/>
        <end position="66"/>
    </location>
</feature>
<feature type="strand" evidence="2">
    <location>
        <begin position="72"/>
        <end position="74"/>
    </location>
</feature>
<feature type="strand" evidence="2">
    <location>
        <begin position="77"/>
        <end position="79"/>
    </location>
</feature>
<feature type="strand" evidence="2">
    <location>
        <begin position="85"/>
        <end position="87"/>
    </location>
</feature>
<feature type="strand" evidence="2">
    <location>
        <begin position="94"/>
        <end position="96"/>
    </location>
</feature>
<comment type="subunit">
    <text>Homodimer.</text>
</comment>
<sequence>METVAYADFARLEMRVGKIVEVKRHENADKLYIVQVDVGQKTLQTVTSLVPYYSEEELMGKTVVVLCNLQKAKMRGETSECMLLCAETDDGSESVLLTPERMMPAGVRVV</sequence>
<name>YGJH_ECOLI</name>
<keyword id="KW-0002">3D-structure</keyword>
<keyword id="KW-1185">Reference proteome</keyword>
<keyword id="KW-0694">RNA-binding</keyword>
<keyword id="KW-0820">tRNA-binding</keyword>
<protein>
    <recommendedName>
        <fullName>tRNA-binding protein YgjH</fullName>
    </recommendedName>
</protein>
<evidence type="ECO:0000255" key="1">
    <source>
        <dbReference type="PROSITE-ProRule" id="PRU00209"/>
    </source>
</evidence>
<evidence type="ECO:0007829" key="2">
    <source>
        <dbReference type="PDB" id="3ERS"/>
    </source>
</evidence>
<reference key="1">
    <citation type="journal article" date="1997" name="Science">
        <title>The complete genome sequence of Escherichia coli K-12.</title>
        <authorList>
            <person name="Blattner F.R."/>
            <person name="Plunkett G. III"/>
            <person name="Bloch C.A."/>
            <person name="Perna N.T."/>
            <person name="Burland V."/>
            <person name="Riley M."/>
            <person name="Collado-Vides J."/>
            <person name="Glasner J.D."/>
            <person name="Rode C.K."/>
            <person name="Mayhew G.F."/>
            <person name="Gregor J."/>
            <person name="Davis N.W."/>
            <person name="Kirkpatrick H.A."/>
            <person name="Goeden M.A."/>
            <person name="Rose D.J."/>
            <person name="Mau B."/>
            <person name="Shao Y."/>
        </authorList>
    </citation>
    <scope>NUCLEOTIDE SEQUENCE [LARGE SCALE GENOMIC DNA]</scope>
    <source>
        <strain>K12 / MG1655 / ATCC 47076</strain>
    </source>
</reference>
<reference key="2">
    <citation type="journal article" date="2006" name="Mol. Syst. Biol.">
        <title>Highly accurate genome sequences of Escherichia coli K-12 strains MG1655 and W3110.</title>
        <authorList>
            <person name="Hayashi K."/>
            <person name="Morooka N."/>
            <person name="Yamamoto Y."/>
            <person name="Fujita K."/>
            <person name="Isono K."/>
            <person name="Choi S."/>
            <person name="Ohtsubo E."/>
            <person name="Baba T."/>
            <person name="Wanner B.L."/>
            <person name="Mori H."/>
            <person name="Horiuchi T."/>
        </authorList>
    </citation>
    <scope>NUCLEOTIDE SEQUENCE [LARGE SCALE GENOMIC DNA]</scope>
    <source>
        <strain>K12 / W3110 / ATCC 27325 / DSM 5911</strain>
    </source>
</reference>
<reference key="3">
    <citation type="journal article" date="2000" name="EMBO J.">
        <title>Crystal structure of trbp111: a structure-specific tRNA-binding protein.</title>
        <authorList>
            <person name="Swairjo M.A."/>
            <person name="Morales A.J."/>
            <person name="Wang C.C."/>
            <person name="Ortiz A.R."/>
            <person name="Schimmel P."/>
        </authorList>
    </citation>
    <scope>X-RAY CRYSTALLOGRAPHY (1.87 ANGSTROMS)</scope>
</reference>
<organism>
    <name type="scientific">Escherichia coli (strain K12)</name>
    <dbReference type="NCBI Taxonomy" id="83333"/>
    <lineage>
        <taxon>Bacteria</taxon>
        <taxon>Pseudomonadati</taxon>
        <taxon>Pseudomonadota</taxon>
        <taxon>Gammaproteobacteria</taxon>
        <taxon>Enterobacterales</taxon>
        <taxon>Enterobacteriaceae</taxon>
        <taxon>Escherichia</taxon>
    </lineage>
</organism>
<accession>P42589</accession>
<accession>Q2M9D2</accession>
<dbReference type="EMBL" id="U18997">
    <property type="protein sequence ID" value="AAA57875.1"/>
    <property type="molecule type" value="Genomic_DNA"/>
</dbReference>
<dbReference type="EMBL" id="U00096">
    <property type="protein sequence ID" value="AAC76109.1"/>
    <property type="molecule type" value="Genomic_DNA"/>
</dbReference>
<dbReference type="EMBL" id="AP009048">
    <property type="protein sequence ID" value="BAE77124.1"/>
    <property type="molecule type" value="Genomic_DNA"/>
</dbReference>
<dbReference type="PIR" id="G65095">
    <property type="entry name" value="G65095"/>
</dbReference>
<dbReference type="RefSeq" id="NP_417545.1">
    <property type="nucleotide sequence ID" value="NC_000913.3"/>
</dbReference>
<dbReference type="RefSeq" id="WP_000450594.1">
    <property type="nucleotide sequence ID" value="NZ_LN832404.1"/>
</dbReference>
<dbReference type="PDB" id="3ERS">
    <property type="method" value="X-ray"/>
    <property type="resolution" value="1.87 A"/>
    <property type="chains" value="X=1-110"/>
</dbReference>
<dbReference type="PDBsum" id="3ERS"/>
<dbReference type="SMR" id="P42589"/>
<dbReference type="BioGRID" id="4263446">
    <property type="interactions" value="19"/>
</dbReference>
<dbReference type="DIP" id="DIP-12234N"/>
<dbReference type="FunCoup" id="P42589">
    <property type="interactions" value="455"/>
</dbReference>
<dbReference type="IntAct" id="P42589">
    <property type="interactions" value="2"/>
</dbReference>
<dbReference type="STRING" id="511145.b3074"/>
<dbReference type="jPOST" id="P42589"/>
<dbReference type="PaxDb" id="511145-b3074"/>
<dbReference type="EnsemblBacteria" id="AAC76109">
    <property type="protein sequence ID" value="AAC76109"/>
    <property type="gene ID" value="b3074"/>
</dbReference>
<dbReference type="GeneID" id="946251"/>
<dbReference type="KEGG" id="ecj:JW3045"/>
<dbReference type="KEGG" id="eco:b3074"/>
<dbReference type="KEGG" id="ecoc:C3026_16790"/>
<dbReference type="PATRIC" id="fig|1411691.4.peg.3656"/>
<dbReference type="EchoBASE" id="EB2578"/>
<dbReference type="eggNOG" id="COG0073">
    <property type="taxonomic scope" value="Bacteria"/>
</dbReference>
<dbReference type="HOGENOM" id="CLU_065946_3_2_6"/>
<dbReference type="InParanoid" id="P42589"/>
<dbReference type="OMA" id="VKANINM"/>
<dbReference type="OrthoDB" id="9794564at2"/>
<dbReference type="PhylomeDB" id="P42589"/>
<dbReference type="BioCyc" id="EcoCyc:G7597-MONOMER"/>
<dbReference type="EvolutionaryTrace" id="P42589"/>
<dbReference type="PRO" id="PR:P42589"/>
<dbReference type="Proteomes" id="UP000000625">
    <property type="component" value="Chromosome"/>
</dbReference>
<dbReference type="GO" id="GO:0042803">
    <property type="term" value="F:protein homodimerization activity"/>
    <property type="evidence" value="ECO:0000314"/>
    <property type="project" value="EcoCyc"/>
</dbReference>
<dbReference type="GO" id="GO:0000049">
    <property type="term" value="F:tRNA binding"/>
    <property type="evidence" value="ECO:0007669"/>
    <property type="project" value="UniProtKB-KW"/>
</dbReference>
<dbReference type="CDD" id="cd02798">
    <property type="entry name" value="tRNA_bind_CsaA"/>
    <property type="match status" value="1"/>
</dbReference>
<dbReference type="Gene3D" id="2.40.50.140">
    <property type="entry name" value="Nucleic acid-binding proteins"/>
    <property type="match status" value="1"/>
</dbReference>
<dbReference type="InterPro" id="IPR012340">
    <property type="entry name" value="NA-bd_OB-fold"/>
</dbReference>
<dbReference type="InterPro" id="IPR002547">
    <property type="entry name" value="tRNA-bd_dom"/>
</dbReference>
<dbReference type="InterPro" id="IPR051270">
    <property type="entry name" value="Tyrosine-tRNA_ligase_regulator"/>
</dbReference>
<dbReference type="NCBIfam" id="NF007492">
    <property type="entry name" value="PRK10089.1-1"/>
    <property type="match status" value="1"/>
</dbReference>
<dbReference type="PANTHER" id="PTHR11586:SF33">
    <property type="entry name" value="AMINOACYL TRNA SYNTHASE COMPLEX-INTERACTING MULTIFUNCTIONAL PROTEIN 1"/>
    <property type="match status" value="1"/>
</dbReference>
<dbReference type="PANTHER" id="PTHR11586">
    <property type="entry name" value="TRNA-AMINOACYLATION COFACTOR ARC1 FAMILY MEMBER"/>
    <property type="match status" value="1"/>
</dbReference>
<dbReference type="Pfam" id="PF01588">
    <property type="entry name" value="tRNA_bind"/>
    <property type="match status" value="1"/>
</dbReference>
<dbReference type="SUPFAM" id="SSF50249">
    <property type="entry name" value="Nucleic acid-binding proteins"/>
    <property type="match status" value="1"/>
</dbReference>
<dbReference type="PROSITE" id="PS50886">
    <property type="entry name" value="TRBD"/>
    <property type="match status" value="1"/>
</dbReference>